<comment type="function">
    <text evidence="1">Participates actively in the response to hyperosmotic and heat shock by preventing the aggregation of stress-denatured proteins, in association with DnaK and GrpE. It is the nucleotide exchange factor for DnaK and may function as a thermosensor. Unfolded proteins bind initially to DnaJ; upon interaction with the DnaJ-bound protein, DnaK hydrolyzes its bound ATP, resulting in the formation of a stable complex. GrpE releases ADP from DnaK; ATP binding to DnaK triggers the release of the substrate protein, thus completing the reaction cycle. Several rounds of ATP-dependent interactions between DnaJ, DnaK and GrpE are required for fully efficient folding.</text>
</comment>
<comment type="subunit">
    <text evidence="1">Homodimer.</text>
</comment>
<comment type="subcellular location">
    <subcellularLocation>
        <location evidence="1">Cytoplasm</location>
    </subcellularLocation>
</comment>
<comment type="similarity">
    <text evidence="1">Belongs to the GrpE family.</text>
</comment>
<gene>
    <name evidence="1" type="primary">grpE</name>
    <name type="ordered locus">PGN_1715</name>
</gene>
<evidence type="ECO:0000255" key="1">
    <source>
        <dbReference type="HAMAP-Rule" id="MF_01151"/>
    </source>
</evidence>
<evidence type="ECO:0000256" key="2">
    <source>
        <dbReference type="SAM" id="MobiDB-lite"/>
    </source>
</evidence>
<protein>
    <recommendedName>
        <fullName evidence="1">Protein GrpE</fullName>
    </recommendedName>
    <alternativeName>
        <fullName evidence="1">HSP-70 cofactor</fullName>
    </alternativeName>
</protein>
<dbReference type="EMBL" id="AP009380">
    <property type="protein sequence ID" value="BAG34234.1"/>
    <property type="molecule type" value="Genomic_DNA"/>
</dbReference>
<dbReference type="RefSeq" id="WP_012458479.1">
    <property type="nucleotide sequence ID" value="NC_010729.1"/>
</dbReference>
<dbReference type="SMR" id="B2RLI9"/>
<dbReference type="GeneID" id="29256879"/>
<dbReference type="KEGG" id="pgn:PGN_1715"/>
<dbReference type="eggNOG" id="COG0576">
    <property type="taxonomic scope" value="Bacteria"/>
</dbReference>
<dbReference type="HOGENOM" id="CLU_057217_5_2_10"/>
<dbReference type="OrthoDB" id="9812586at2"/>
<dbReference type="BioCyc" id="PGIN431947:G1G2V-1923-MONOMER"/>
<dbReference type="Proteomes" id="UP000008842">
    <property type="component" value="Chromosome"/>
</dbReference>
<dbReference type="GO" id="GO:0005737">
    <property type="term" value="C:cytoplasm"/>
    <property type="evidence" value="ECO:0007669"/>
    <property type="project" value="UniProtKB-SubCell"/>
</dbReference>
<dbReference type="GO" id="GO:0000774">
    <property type="term" value="F:adenyl-nucleotide exchange factor activity"/>
    <property type="evidence" value="ECO:0007669"/>
    <property type="project" value="InterPro"/>
</dbReference>
<dbReference type="GO" id="GO:0042803">
    <property type="term" value="F:protein homodimerization activity"/>
    <property type="evidence" value="ECO:0007669"/>
    <property type="project" value="InterPro"/>
</dbReference>
<dbReference type="GO" id="GO:0051087">
    <property type="term" value="F:protein-folding chaperone binding"/>
    <property type="evidence" value="ECO:0007669"/>
    <property type="project" value="InterPro"/>
</dbReference>
<dbReference type="GO" id="GO:0051082">
    <property type="term" value="F:unfolded protein binding"/>
    <property type="evidence" value="ECO:0007669"/>
    <property type="project" value="TreeGrafter"/>
</dbReference>
<dbReference type="GO" id="GO:0006457">
    <property type="term" value="P:protein folding"/>
    <property type="evidence" value="ECO:0007669"/>
    <property type="project" value="InterPro"/>
</dbReference>
<dbReference type="CDD" id="cd00446">
    <property type="entry name" value="GrpE"/>
    <property type="match status" value="1"/>
</dbReference>
<dbReference type="Gene3D" id="3.90.20.20">
    <property type="match status" value="1"/>
</dbReference>
<dbReference type="Gene3D" id="2.30.22.10">
    <property type="entry name" value="Head domain of nucleotide exchange factor GrpE"/>
    <property type="match status" value="1"/>
</dbReference>
<dbReference type="HAMAP" id="MF_01151">
    <property type="entry name" value="GrpE"/>
    <property type="match status" value="1"/>
</dbReference>
<dbReference type="InterPro" id="IPR000740">
    <property type="entry name" value="GrpE"/>
</dbReference>
<dbReference type="InterPro" id="IPR013805">
    <property type="entry name" value="GrpE_coiled_coil"/>
</dbReference>
<dbReference type="InterPro" id="IPR009012">
    <property type="entry name" value="GrpE_head"/>
</dbReference>
<dbReference type="PANTHER" id="PTHR21237">
    <property type="entry name" value="GRPE PROTEIN"/>
    <property type="match status" value="1"/>
</dbReference>
<dbReference type="PANTHER" id="PTHR21237:SF23">
    <property type="entry name" value="GRPE PROTEIN HOMOLOG, MITOCHONDRIAL"/>
    <property type="match status" value="1"/>
</dbReference>
<dbReference type="Pfam" id="PF01025">
    <property type="entry name" value="GrpE"/>
    <property type="match status" value="1"/>
</dbReference>
<dbReference type="PRINTS" id="PR00773">
    <property type="entry name" value="GRPEPROTEIN"/>
</dbReference>
<dbReference type="SUPFAM" id="SSF58014">
    <property type="entry name" value="Coiled-coil domain of nucleotide exchange factor GrpE"/>
    <property type="match status" value="1"/>
</dbReference>
<dbReference type="SUPFAM" id="SSF51064">
    <property type="entry name" value="Head domain of nucleotide exchange factor GrpE"/>
    <property type="match status" value="1"/>
</dbReference>
<dbReference type="PROSITE" id="PS01071">
    <property type="entry name" value="GRPE"/>
    <property type="match status" value="1"/>
</dbReference>
<organism>
    <name type="scientific">Porphyromonas gingivalis (strain ATCC 33277 / DSM 20709 / CIP 103683 / JCM 12257 / NCTC 11834 / 2561)</name>
    <dbReference type="NCBI Taxonomy" id="431947"/>
    <lineage>
        <taxon>Bacteria</taxon>
        <taxon>Pseudomonadati</taxon>
        <taxon>Bacteroidota</taxon>
        <taxon>Bacteroidia</taxon>
        <taxon>Bacteroidales</taxon>
        <taxon>Porphyromonadaceae</taxon>
        <taxon>Porphyromonas</taxon>
    </lineage>
</organism>
<keyword id="KW-0143">Chaperone</keyword>
<keyword id="KW-0963">Cytoplasm</keyword>
<keyword id="KW-0346">Stress response</keyword>
<feature type="chain" id="PRO_1000137594" description="Protein GrpE">
    <location>
        <begin position="1"/>
        <end position="194"/>
    </location>
</feature>
<feature type="region of interest" description="Disordered" evidence="2">
    <location>
        <begin position="1"/>
        <end position="44"/>
    </location>
</feature>
<feature type="compositionally biased region" description="Basic and acidic residues" evidence="2">
    <location>
        <begin position="1"/>
        <end position="12"/>
    </location>
</feature>
<name>GRPE_PORG3</name>
<sequence>MNKQKNNRERTPQPEQDTERDEQLTNSHENDIDSAPAAEENDKVADPVEELTAQLAALNDTHLRLMAEYDNYRKRTLKEKSELIRNGGEKVLVDLLPVIDDFERALSNLGDMSEPAAIKGGVELIYSKFMDYLQKQGVKKIETADLPFDADLCDAVAMIPAPSAEQKGKVIDCVKTGYTLNDKVIRHAHVVVGE</sequence>
<proteinExistence type="inferred from homology"/>
<accession>B2RLI9</accession>
<reference key="1">
    <citation type="journal article" date="2008" name="DNA Res.">
        <title>Determination of the genome sequence of Porphyromonas gingivalis strain ATCC 33277 and genomic comparison with strain W83 revealed extensive genome rearrangements in P. gingivalis.</title>
        <authorList>
            <person name="Naito M."/>
            <person name="Hirakawa H."/>
            <person name="Yamashita A."/>
            <person name="Ohara N."/>
            <person name="Shoji M."/>
            <person name="Yukitake H."/>
            <person name="Nakayama K."/>
            <person name="Toh H."/>
            <person name="Yoshimura F."/>
            <person name="Kuhara S."/>
            <person name="Hattori M."/>
            <person name="Hayashi T."/>
            <person name="Nakayama K."/>
        </authorList>
    </citation>
    <scope>NUCLEOTIDE SEQUENCE [LARGE SCALE GENOMIC DNA]</scope>
    <source>
        <strain>ATCC 33277 / DSM 20709 / CIP 103683 / JCM 12257 / NCTC 11834 / 2561</strain>
    </source>
</reference>